<protein>
    <recommendedName>
        <fullName evidence="1">FMN reductase (NADH) RutF</fullName>
        <ecNumber evidence="1">1.5.1.42</ecNumber>
    </recommendedName>
    <alternativeName>
        <fullName evidence="1">FMN reductase</fullName>
    </alternativeName>
    <alternativeName>
        <fullName evidence="1">NADH-flavin reductase RutF</fullName>
    </alternativeName>
    <alternativeName>
        <fullName evidence="1">NADH:flavin oxidoreductase</fullName>
    </alternativeName>
</protein>
<feature type="chain" id="PRO_0000403015" description="FMN reductase (NADH) RutF">
    <location>
        <begin position="1"/>
        <end position="164"/>
    </location>
</feature>
<evidence type="ECO:0000255" key="1">
    <source>
        <dbReference type="HAMAP-Rule" id="MF_00833"/>
    </source>
</evidence>
<reference key="1">
    <citation type="journal article" date="2009" name="PLoS Genet.">
        <title>Organised genome dynamics in the Escherichia coli species results in highly diverse adaptive paths.</title>
        <authorList>
            <person name="Touchon M."/>
            <person name="Hoede C."/>
            <person name="Tenaillon O."/>
            <person name="Barbe V."/>
            <person name="Baeriswyl S."/>
            <person name="Bidet P."/>
            <person name="Bingen E."/>
            <person name="Bonacorsi S."/>
            <person name="Bouchier C."/>
            <person name="Bouvet O."/>
            <person name="Calteau A."/>
            <person name="Chiapello H."/>
            <person name="Clermont O."/>
            <person name="Cruveiller S."/>
            <person name="Danchin A."/>
            <person name="Diard M."/>
            <person name="Dossat C."/>
            <person name="Karoui M.E."/>
            <person name="Frapy E."/>
            <person name="Garry L."/>
            <person name="Ghigo J.M."/>
            <person name="Gilles A.M."/>
            <person name="Johnson J."/>
            <person name="Le Bouguenec C."/>
            <person name="Lescat M."/>
            <person name="Mangenot S."/>
            <person name="Martinez-Jehanne V."/>
            <person name="Matic I."/>
            <person name="Nassif X."/>
            <person name="Oztas S."/>
            <person name="Petit M.A."/>
            <person name="Pichon C."/>
            <person name="Rouy Z."/>
            <person name="Ruf C.S."/>
            <person name="Schneider D."/>
            <person name="Tourret J."/>
            <person name="Vacherie B."/>
            <person name="Vallenet D."/>
            <person name="Medigue C."/>
            <person name="Rocha E.P.C."/>
            <person name="Denamur E."/>
        </authorList>
    </citation>
    <scope>NUCLEOTIDE SEQUENCE [LARGE SCALE GENOMIC DNA]</scope>
    <source>
        <strain>UMN026 / ExPEC</strain>
    </source>
</reference>
<keyword id="KW-0285">Flavoprotein</keyword>
<keyword id="KW-0288">FMN</keyword>
<keyword id="KW-0520">NAD</keyword>
<keyword id="KW-0560">Oxidoreductase</keyword>
<gene>
    <name evidence="1" type="primary">rutF</name>
    <name type="ordered locus">ECUMN_1190</name>
</gene>
<name>RUTF_ECOLU</name>
<proteinExistence type="inferred from homology"/>
<organism>
    <name type="scientific">Escherichia coli O17:K52:H18 (strain UMN026 / ExPEC)</name>
    <dbReference type="NCBI Taxonomy" id="585056"/>
    <lineage>
        <taxon>Bacteria</taxon>
        <taxon>Pseudomonadati</taxon>
        <taxon>Pseudomonadota</taxon>
        <taxon>Gammaproteobacteria</taxon>
        <taxon>Enterobacterales</taxon>
        <taxon>Enterobacteriaceae</taxon>
        <taxon>Escherichia</taxon>
    </lineage>
</organism>
<comment type="function">
    <text evidence="1">Catalyzes the reduction of FMN to FMNH2 which is used to reduce pyrimidine by RutA via the Rut pathway.</text>
</comment>
<comment type="catalytic activity">
    <reaction evidence="1">
        <text>FMNH2 + NAD(+) = FMN + NADH + 2 H(+)</text>
        <dbReference type="Rhea" id="RHEA:21620"/>
        <dbReference type="ChEBI" id="CHEBI:15378"/>
        <dbReference type="ChEBI" id="CHEBI:57540"/>
        <dbReference type="ChEBI" id="CHEBI:57618"/>
        <dbReference type="ChEBI" id="CHEBI:57945"/>
        <dbReference type="ChEBI" id="CHEBI:58210"/>
        <dbReference type="EC" id="1.5.1.42"/>
    </reaction>
</comment>
<comment type="induction">
    <text evidence="1">Up-regulated by the nitrogen regulatory protein C (NtrC also called GlnG) and repressed by RutR.</text>
</comment>
<comment type="similarity">
    <text evidence="1">Belongs to the non-flavoprotein flavin reductase family. RutF subfamily.</text>
</comment>
<accession>B7N3G3</accession>
<dbReference type="EC" id="1.5.1.42" evidence="1"/>
<dbReference type="EMBL" id="CU928163">
    <property type="protein sequence ID" value="CAR12399.1"/>
    <property type="molecule type" value="Genomic_DNA"/>
</dbReference>
<dbReference type="RefSeq" id="WP_001028095.1">
    <property type="nucleotide sequence ID" value="NC_011751.1"/>
</dbReference>
<dbReference type="RefSeq" id="YP_002411943.1">
    <property type="nucleotide sequence ID" value="NC_011751.1"/>
</dbReference>
<dbReference type="SMR" id="B7N3G3"/>
<dbReference type="STRING" id="585056.ECUMN_1190"/>
<dbReference type="GeneID" id="75171083"/>
<dbReference type="KEGG" id="eum:ECUMN_1190"/>
<dbReference type="PATRIC" id="fig|585056.7.peg.1387"/>
<dbReference type="HOGENOM" id="CLU_059021_2_2_6"/>
<dbReference type="Proteomes" id="UP000007097">
    <property type="component" value="Chromosome"/>
</dbReference>
<dbReference type="GO" id="GO:0010181">
    <property type="term" value="F:FMN binding"/>
    <property type="evidence" value="ECO:0007669"/>
    <property type="project" value="InterPro"/>
</dbReference>
<dbReference type="GO" id="GO:0052874">
    <property type="term" value="F:FMN reductase (NADH) activity"/>
    <property type="evidence" value="ECO:0007669"/>
    <property type="project" value="UniProtKB-EC"/>
</dbReference>
<dbReference type="GO" id="GO:0008752">
    <property type="term" value="F:FMN reductase [NAD(P)H] activity"/>
    <property type="evidence" value="ECO:0007669"/>
    <property type="project" value="InterPro"/>
</dbReference>
<dbReference type="GO" id="GO:0042602">
    <property type="term" value="F:riboflavin reductase (NADPH) activity"/>
    <property type="evidence" value="ECO:0007669"/>
    <property type="project" value="UniProtKB-UniRule"/>
</dbReference>
<dbReference type="GO" id="GO:0019740">
    <property type="term" value="P:nitrogen utilization"/>
    <property type="evidence" value="ECO:0007669"/>
    <property type="project" value="UniProtKB-UniRule"/>
</dbReference>
<dbReference type="GO" id="GO:0006212">
    <property type="term" value="P:uracil catabolic process"/>
    <property type="evidence" value="ECO:0007669"/>
    <property type="project" value="UniProtKB-UniRule"/>
</dbReference>
<dbReference type="FunFam" id="2.30.110.10:FF:000002">
    <property type="entry name" value="FMN reductase (NADH) RutF"/>
    <property type="match status" value="1"/>
</dbReference>
<dbReference type="Gene3D" id="2.30.110.10">
    <property type="entry name" value="Electron Transport, Fmn-binding Protein, Chain A"/>
    <property type="match status" value="1"/>
</dbReference>
<dbReference type="HAMAP" id="MF_00833">
    <property type="entry name" value="RutF"/>
    <property type="match status" value="1"/>
</dbReference>
<dbReference type="InterPro" id="IPR002563">
    <property type="entry name" value="Flavin_Rdtase-like_dom"/>
</dbReference>
<dbReference type="InterPro" id="IPR050268">
    <property type="entry name" value="NADH-dep_flavin_reductase"/>
</dbReference>
<dbReference type="InterPro" id="IPR019917">
    <property type="entry name" value="RutF"/>
</dbReference>
<dbReference type="InterPro" id="IPR012349">
    <property type="entry name" value="Split_barrel_FMN-bd"/>
</dbReference>
<dbReference type="NCBIfam" id="TIGR03615">
    <property type="entry name" value="RutF"/>
    <property type="match status" value="1"/>
</dbReference>
<dbReference type="PANTHER" id="PTHR30466">
    <property type="entry name" value="FLAVIN REDUCTASE"/>
    <property type="match status" value="1"/>
</dbReference>
<dbReference type="PANTHER" id="PTHR30466:SF1">
    <property type="entry name" value="FMN REDUCTASE (NADH) RUTF"/>
    <property type="match status" value="1"/>
</dbReference>
<dbReference type="Pfam" id="PF01613">
    <property type="entry name" value="Flavin_Reduct"/>
    <property type="match status" value="1"/>
</dbReference>
<dbReference type="SMART" id="SM00903">
    <property type="entry name" value="Flavin_Reduct"/>
    <property type="match status" value="1"/>
</dbReference>
<dbReference type="SUPFAM" id="SSF50475">
    <property type="entry name" value="FMN-binding split barrel"/>
    <property type="match status" value="1"/>
</dbReference>
<sequence length="164" mass="17747">MNIVDQQTFRDAMSCMGAAVNIITTDGPAGRAGFTASAVCSVTDTPPTLLVCLNRGASVWPVFNENRTLCVNTLSAGQEPLSNLFGGKTPMEHRFAAARWQTGVTGCPQLEEALVSFDCRISQVVSVGTHDILFCAIEAIHRHATPYGLVWFDRSYHALMRPAC</sequence>